<sequence>MVTHAAGARTFCEEQKKGSTYSVPKSKEKLMEKHSQEARQADRESEKPVDSLHPGAGTAKHPPPAASLEEKPDVKQKSSRKKVVVPQIIITRASNETLVSCSSSGSDQQRTIREPEDWGPYRRHRNPSTADAYNSHLKE</sequence>
<proteinExistence type="evidence at protein level"/>
<gene>
    <name type="primary">SPATA33</name>
    <name type="synonym">C16orf55</name>
</gene>
<dbReference type="EMBL" id="AK056168">
    <property type="protein sequence ID" value="BAB71109.1"/>
    <property type="molecule type" value="mRNA"/>
</dbReference>
<dbReference type="EMBL" id="AK303024">
    <property type="protein sequence ID" value="BAG64150.1"/>
    <property type="molecule type" value="mRNA"/>
</dbReference>
<dbReference type="EMBL" id="AC010538">
    <property type="status" value="NOT_ANNOTATED_CDS"/>
    <property type="molecule type" value="Genomic_DNA"/>
</dbReference>
<dbReference type="EMBL" id="CH471184">
    <property type="protein sequence ID" value="EAW66714.1"/>
    <property type="molecule type" value="Genomic_DNA"/>
</dbReference>
<dbReference type="EMBL" id="BC148299">
    <property type="protein sequence ID" value="AAI48300.1"/>
    <property type="molecule type" value="mRNA"/>
</dbReference>
<dbReference type="CCDS" id="CCDS10983.1">
    <molecule id="Q96N06-1"/>
</dbReference>
<dbReference type="CCDS" id="CCDS62012.1">
    <molecule id="Q96N06-2"/>
</dbReference>
<dbReference type="RefSeq" id="NP_001258836.1">
    <molecule id="Q96N06-2"/>
    <property type="nucleotide sequence ID" value="NM_001271907.2"/>
</dbReference>
<dbReference type="RefSeq" id="NP_001258837.1">
    <property type="nucleotide sequence ID" value="NM_001271908.1"/>
</dbReference>
<dbReference type="RefSeq" id="NP_001258838.1">
    <property type="nucleotide sequence ID" value="NM_001271909.1"/>
</dbReference>
<dbReference type="RefSeq" id="NP_001258839.1">
    <property type="nucleotide sequence ID" value="NM_001271910.1"/>
</dbReference>
<dbReference type="RefSeq" id="NP_694570.1">
    <molecule id="Q96N06-1"/>
    <property type="nucleotide sequence ID" value="NM_153025.3"/>
</dbReference>
<dbReference type="BioGRID" id="125847">
    <property type="interactions" value="32"/>
</dbReference>
<dbReference type="FunCoup" id="Q96N06">
    <property type="interactions" value="61"/>
</dbReference>
<dbReference type="IntAct" id="Q96N06">
    <property type="interactions" value="17"/>
</dbReference>
<dbReference type="STRING" id="9606.ENSP00000462996"/>
<dbReference type="GlyCosmos" id="Q96N06">
    <property type="glycosylation" value="1 site, 1 glycan"/>
</dbReference>
<dbReference type="GlyGen" id="Q96N06">
    <property type="glycosylation" value="3 sites, 1 N-linked glycan (1 site), 1 O-linked glycan (2 sites)"/>
</dbReference>
<dbReference type="iPTMnet" id="Q96N06"/>
<dbReference type="PhosphoSitePlus" id="Q96N06"/>
<dbReference type="BioMuta" id="SPATA33"/>
<dbReference type="DMDM" id="74732471"/>
<dbReference type="jPOST" id="Q96N06"/>
<dbReference type="MassIVE" id="Q96N06"/>
<dbReference type="PaxDb" id="9606-ENSP00000462996"/>
<dbReference type="PeptideAtlas" id="Q96N06"/>
<dbReference type="ProteomicsDB" id="77439">
    <molecule id="Q96N06-1"/>
</dbReference>
<dbReference type="Pumba" id="Q96N06"/>
<dbReference type="TopDownProteomics" id="Q96N06-1">
    <molecule id="Q96N06-1"/>
</dbReference>
<dbReference type="Antibodypedia" id="64236">
    <property type="antibodies" value="19 antibodies from 9 providers"/>
</dbReference>
<dbReference type="DNASU" id="124045"/>
<dbReference type="Ensembl" id="ENST00000301031.8">
    <molecule id="Q96N06-1"/>
    <property type="protein sequence ID" value="ENSP00000301031.4"/>
    <property type="gene ID" value="ENSG00000167523.15"/>
</dbReference>
<dbReference type="Ensembl" id="ENST00000579310.6">
    <molecule id="Q96N06-2"/>
    <property type="protein sequence ID" value="ENSP00000462996.1"/>
    <property type="gene ID" value="ENSG00000167523.15"/>
</dbReference>
<dbReference type="GeneID" id="124045"/>
<dbReference type="KEGG" id="hsa:124045"/>
<dbReference type="MANE-Select" id="ENST00000579310.6">
    <molecule id="Q96N06-2"/>
    <property type="protein sequence ID" value="ENSP00000462996.1"/>
    <property type="RefSeq nucleotide sequence ID" value="NM_001271907.2"/>
    <property type="RefSeq protein sequence ID" value="NP_001258836.1"/>
</dbReference>
<dbReference type="UCSC" id="uc002fnw.3">
    <molecule id="Q96N06-1"/>
    <property type="organism name" value="human"/>
</dbReference>
<dbReference type="AGR" id="HGNC:26463"/>
<dbReference type="CTD" id="124045"/>
<dbReference type="DisGeNET" id="124045"/>
<dbReference type="GeneCards" id="SPATA33"/>
<dbReference type="HGNC" id="HGNC:26463">
    <property type="gene designation" value="SPATA33"/>
</dbReference>
<dbReference type="HPA" id="ENSG00000167523">
    <property type="expression patterns" value="Tissue enriched (testis)"/>
</dbReference>
<dbReference type="MIM" id="615409">
    <property type="type" value="gene"/>
</dbReference>
<dbReference type="neXtProt" id="NX_Q96N06"/>
<dbReference type="OpenTargets" id="ENSG00000167523"/>
<dbReference type="PharmGKB" id="PA142672262"/>
<dbReference type="VEuPathDB" id="HostDB:ENSG00000167523"/>
<dbReference type="eggNOG" id="ENOG502TF19">
    <property type="taxonomic scope" value="Eukaryota"/>
</dbReference>
<dbReference type="GeneTree" id="ENSGT00390000014546"/>
<dbReference type="InParanoid" id="Q96N06"/>
<dbReference type="OMA" id="GPFYRHR"/>
<dbReference type="OrthoDB" id="9838277at2759"/>
<dbReference type="PAN-GO" id="Q96N06">
    <property type="GO annotations" value="2 GO annotations based on evolutionary models"/>
</dbReference>
<dbReference type="PhylomeDB" id="Q96N06"/>
<dbReference type="TreeFam" id="TF337053"/>
<dbReference type="PathwayCommons" id="Q96N06"/>
<dbReference type="SignaLink" id="Q96N06"/>
<dbReference type="BioGRID-ORCS" id="124045">
    <property type="hits" value="19 hits in 1144 CRISPR screens"/>
</dbReference>
<dbReference type="ChiTaRS" id="SPATA33">
    <property type="organism name" value="human"/>
</dbReference>
<dbReference type="GenomeRNAi" id="124045"/>
<dbReference type="Pharos" id="Q96N06">
    <property type="development level" value="Tdark"/>
</dbReference>
<dbReference type="PRO" id="PR:Q96N06"/>
<dbReference type="Proteomes" id="UP000005640">
    <property type="component" value="Chromosome 16"/>
</dbReference>
<dbReference type="RNAct" id="Q96N06">
    <property type="molecule type" value="protein"/>
</dbReference>
<dbReference type="Bgee" id="ENSG00000167523">
    <property type="expression patterns" value="Expressed in sperm and 119 other cell types or tissues"/>
</dbReference>
<dbReference type="ExpressionAtlas" id="Q96N06">
    <property type="expression patterns" value="baseline and differential"/>
</dbReference>
<dbReference type="GO" id="GO:0005737">
    <property type="term" value="C:cytoplasm"/>
    <property type="evidence" value="ECO:0000250"/>
    <property type="project" value="UniProtKB"/>
</dbReference>
<dbReference type="GO" id="GO:0005829">
    <property type="term" value="C:cytosol"/>
    <property type="evidence" value="ECO:0007669"/>
    <property type="project" value="UniProtKB-SubCell"/>
</dbReference>
<dbReference type="GO" id="GO:0005739">
    <property type="term" value="C:mitochondrion"/>
    <property type="evidence" value="ECO:0007669"/>
    <property type="project" value="UniProtKB-SubCell"/>
</dbReference>
<dbReference type="GO" id="GO:0005634">
    <property type="term" value="C:nucleus"/>
    <property type="evidence" value="ECO:0000318"/>
    <property type="project" value="GO_Central"/>
</dbReference>
<dbReference type="GO" id="GO:0097225">
    <property type="term" value="C:sperm midpiece"/>
    <property type="evidence" value="ECO:0000250"/>
    <property type="project" value="UniProtKB"/>
</dbReference>
<dbReference type="GO" id="GO:0097226">
    <property type="term" value="C:sperm mitochondrial sheath"/>
    <property type="evidence" value="ECO:0000250"/>
    <property type="project" value="UniProtKB"/>
</dbReference>
<dbReference type="GO" id="GO:0000423">
    <property type="term" value="P:mitophagy"/>
    <property type="evidence" value="ECO:0000250"/>
    <property type="project" value="UniProtKB"/>
</dbReference>
<dbReference type="InterPro" id="IPR027930">
    <property type="entry name" value="DUF4609"/>
</dbReference>
<dbReference type="PANTHER" id="PTHR38649">
    <property type="entry name" value="SPERMATOGENESIS-ASSOCIATED PROTEIN 33"/>
    <property type="match status" value="1"/>
</dbReference>
<dbReference type="PANTHER" id="PTHR38649:SF1">
    <property type="entry name" value="SPERMATOGENESIS-ASSOCIATED PROTEIN 33"/>
    <property type="match status" value="1"/>
</dbReference>
<dbReference type="Pfam" id="PF15382">
    <property type="entry name" value="DUF4609"/>
    <property type="match status" value="1"/>
</dbReference>
<organism>
    <name type="scientific">Homo sapiens</name>
    <name type="common">Human</name>
    <dbReference type="NCBI Taxonomy" id="9606"/>
    <lineage>
        <taxon>Eukaryota</taxon>
        <taxon>Metazoa</taxon>
        <taxon>Chordata</taxon>
        <taxon>Craniata</taxon>
        <taxon>Vertebrata</taxon>
        <taxon>Euteleostomi</taxon>
        <taxon>Mammalia</taxon>
        <taxon>Eutheria</taxon>
        <taxon>Euarchontoglires</taxon>
        <taxon>Primates</taxon>
        <taxon>Haplorrhini</taxon>
        <taxon>Catarrhini</taxon>
        <taxon>Hominidae</taxon>
        <taxon>Homo</taxon>
    </lineage>
</organism>
<accession>Q96N06</accession>
<accession>A8WFL2</accession>
<accession>B4DZN8</accession>
<feature type="chain" id="PRO_0000282409" description="Spermatogenesis-associated protein 33">
    <location>
        <begin position="1"/>
        <end position="139"/>
    </location>
</feature>
<feature type="region of interest" description="Disordered" evidence="2">
    <location>
        <begin position="1"/>
        <end position="83"/>
    </location>
</feature>
<feature type="region of interest" description="Interaction with ATG16L1" evidence="1">
    <location>
        <begin position="1"/>
        <end position="67"/>
    </location>
</feature>
<feature type="region of interest" description="Interaction with VDAC2" evidence="1">
    <location>
        <begin position="68"/>
        <end position="139"/>
    </location>
</feature>
<feature type="region of interest" description="Disordered" evidence="2">
    <location>
        <begin position="97"/>
        <end position="139"/>
    </location>
</feature>
<feature type="short sequence motif" description="PQIIIT" evidence="1">
    <location>
        <begin position="86"/>
        <end position="91"/>
    </location>
</feature>
<feature type="compositionally biased region" description="Basic and acidic residues" evidence="2">
    <location>
        <begin position="25"/>
        <end position="50"/>
    </location>
</feature>
<feature type="compositionally biased region" description="Polar residues" evidence="2">
    <location>
        <begin position="97"/>
        <end position="109"/>
    </location>
</feature>
<feature type="compositionally biased region" description="Basic and acidic residues" evidence="2">
    <location>
        <begin position="110"/>
        <end position="120"/>
    </location>
</feature>
<feature type="modified residue" description="Phosphoserine" evidence="1">
    <location>
        <position position="94"/>
    </location>
</feature>
<feature type="splice variant" id="VSP_053288" description="In isoform 2." evidence="4">
    <original>MVTHAAGARTFC</original>
    <variation>MGLSKSKEKPRKG</variation>
    <location>
        <begin position="1"/>
        <end position="12"/>
    </location>
</feature>
<feature type="sequence variant" id="VAR_050897" description="In dbSNP:rs13329897.">
    <original>S</original>
    <variation>L</variation>
    <location>
        <position position="45"/>
    </location>
</feature>
<name>SPT33_HUMAN</name>
<reference key="1">
    <citation type="journal article" date="2004" name="Nat. Genet.">
        <title>Complete sequencing and characterization of 21,243 full-length human cDNAs.</title>
        <authorList>
            <person name="Ota T."/>
            <person name="Suzuki Y."/>
            <person name="Nishikawa T."/>
            <person name="Otsuki T."/>
            <person name="Sugiyama T."/>
            <person name="Irie R."/>
            <person name="Wakamatsu A."/>
            <person name="Hayashi K."/>
            <person name="Sato H."/>
            <person name="Nagai K."/>
            <person name="Kimura K."/>
            <person name="Makita H."/>
            <person name="Sekine M."/>
            <person name="Obayashi M."/>
            <person name="Nishi T."/>
            <person name="Shibahara T."/>
            <person name="Tanaka T."/>
            <person name="Ishii S."/>
            <person name="Yamamoto J."/>
            <person name="Saito K."/>
            <person name="Kawai Y."/>
            <person name="Isono Y."/>
            <person name="Nakamura Y."/>
            <person name="Nagahari K."/>
            <person name="Murakami K."/>
            <person name="Yasuda T."/>
            <person name="Iwayanagi T."/>
            <person name="Wagatsuma M."/>
            <person name="Shiratori A."/>
            <person name="Sudo H."/>
            <person name="Hosoiri T."/>
            <person name="Kaku Y."/>
            <person name="Kodaira H."/>
            <person name="Kondo H."/>
            <person name="Sugawara M."/>
            <person name="Takahashi M."/>
            <person name="Kanda K."/>
            <person name="Yokoi T."/>
            <person name="Furuya T."/>
            <person name="Kikkawa E."/>
            <person name="Omura Y."/>
            <person name="Abe K."/>
            <person name="Kamihara K."/>
            <person name="Katsuta N."/>
            <person name="Sato K."/>
            <person name="Tanikawa M."/>
            <person name="Yamazaki M."/>
            <person name="Ninomiya K."/>
            <person name="Ishibashi T."/>
            <person name="Yamashita H."/>
            <person name="Murakawa K."/>
            <person name="Fujimori K."/>
            <person name="Tanai H."/>
            <person name="Kimata M."/>
            <person name="Watanabe M."/>
            <person name="Hiraoka S."/>
            <person name="Chiba Y."/>
            <person name="Ishida S."/>
            <person name="Ono Y."/>
            <person name="Takiguchi S."/>
            <person name="Watanabe S."/>
            <person name="Yosida M."/>
            <person name="Hotuta T."/>
            <person name="Kusano J."/>
            <person name="Kanehori K."/>
            <person name="Takahashi-Fujii A."/>
            <person name="Hara H."/>
            <person name="Tanase T.-O."/>
            <person name="Nomura Y."/>
            <person name="Togiya S."/>
            <person name="Komai F."/>
            <person name="Hara R."/>
            <person name="Takeuchi K."/>
            <person name="Arita M."/>
            <person name="Imose N."/>
            <person name="Musashino K."/>
            <person name="Yuuki H."/>
            <person name="Oshima A."/>
            <person name="Sasaki N."/>
            <person name="Aotsuka S."/>
            <person name="Yoshikawa Y."/>
            <person name="Matsunawa H."/>
            <person name="Ichihara T."/>
            <person name="Shiohata N."/>
            <person name="Sano S."/>
            <person name="Moriya S."/>
            <person name="Momiyama H."/>
            <person name="Satoh N."/>
            <person name="Takami S."/>
            <person name="Terashima Y."/>
            <person name="Suzuki O."/>
            <person name="Nakagawa S."/>
            <person name="Senoh A."/>
            <person name="Mizoguchi H."/>
            <person name="Goto Y."/>
            <person name="Shimizu F."/>
            <person name="Wakebe H."/>
            <person name="Hishigaki H."/>
            <person name="Watanabe T."/>
            <person name="Sugiyama A."/>
            <person name="Takemoto M."/>
            <person name="Kawakami B."/>
            <person name="Yamazaki M."/>
            <person name="Watanabe K."/>
            <person name="Kumagai A."/>
            <person name="Itakura S."/>
            <person name="Fukuzumi Y."/>
            <person name="Fujimori Y."/>
            <person name="Komiyama M."/>
            <person name="Tashiro H."/>
            <person name="Tanigami A."/>
            <person name="Fujiwara T."/>
            <person name="Ono T."/>
            <person name="Yamada K."/>
            <person name="Fujii Y."/>
            <person name="Ozaki K."/>
            <person name="Hirao M."/>
            <person name="Ohmori Y."/>
            <person name="Kawabata A."/>
            <person name="Hikiji T."/>
            <person name="Kobatake N."/>
            <person name="Inagaki H."/>
            <person name="Ikema Y."/>
            <person name="Okamoto S."/>
            <person name="Okitani R."/>
            <person name="Kawakami T."/>
            <person name="Noguchi S."/>
            <person name="Itoh T."/>
            <person name="Shigeta K."/>
            <person name="Senba T."/>
            <person name="Matsumura K."/>
            <person name="Nakajima Y."/>
            <person name="Mizuno T."/>
            <person name="Morinaga M."/>
            <person name="Sasaki M."/>
            <person name="Togashi T."/>
            <person name="Oyama M."/>
            <person name="Hata H."/>
            <person name="Watanabe M."/>
            <person name="Komatsu T."/>
            <person name="Mizushima-Sugano J."/>
            <person name="Satoh T."/>
            <person name="Shirai Y."/>
            <person name="Takahashi Y."/>
            <person name="Nakagawa K."/>
            <person name="Okumura K."/>
            <person name="Nagase T."/>
            <person name="Nomura N."/>
            <person name="Kikuchi H."/>
            <person name="Masuho Y."/>
            <person name="Yamashita R."/>
            <person name="Nakai K."/>
            <person name="Yada T."/>
            <person name="Nakamura Y."/>
            <person name="Ohara O."/>
            <person name="Isogai T."/>
            <person name="Sugano S."/>
        </authorList>
    </citation>
    <scope>NUCLEOTIDE SEQUENCE [LARGE SCALE MRNA] (ISOFORMS 1 AND 2)</scope>
    <source>
        <tissue>Teratocarcinoma</tissue>
        <tissue>Testis</tissue>
    </source>
</reference>
<reference key="2">
    <citation type="journal article" date="2004" name="Nature">
        <title>The sequence and analysis of duplication-rich human chromosome 16.</title>
        <authorList>
            <person name="Martin J."/>
            <person name="Han C."/>
            <person name="Gordon L.A."/>
            <person name="Terry A."/>
            <person name="Prabhakar S."/>
            <person name="She X."/>
            <person name="Xie G."/>
            <person name="Hellsten U."/>
            <person name="Chan Y.M."/>
            <person name="Altherr M."/>
            <person name="Couronne O."/>
            <person name="Aerts A."/>
            <person name="Bajorek E."/>
            <person name="Black S."/>
            <person name="Blumer H."/>
            <person name="Branscomb E."/>
            <person name="Brown N.C."/>
            <person name="Bruno W.J."/>
            <person name="Buckingham J.M."/>
            <person name="Callen D.F."/>
            <person name="Campbell C.S."/>
            <person name="Campbell M.L."/>
            <person name="Campbell E.W."/>
            <person name="Caoile C."/>
            <person name="Challacombe J.F."/>
            <person name="Chasteen L.A."/>
            <person name="Chertkov O."/>
            <person name="Chi H.C."/>
            <person name="Christensen M."/>
            <person name="Clark L.M."/>
            <person name="Cohn J.D."/>
            <person name="Denys M."/>
            <person name="Detter J.C."/>
            <person name="Dickson M."/>
            <person name="Dimitrijevic-Bussod M."/>
            <person name="Escobar J."/>
            <person name="Fawcett J.J."/>
            <person name="Flowers D."/>
            <person name="Fotopulos D."/>
            <person name="Glavina T."/>
            <person name="Gomez M."/>
            <person name="Gonzales E."/>
            <person name="Goodstein D."/>
            <person name="Goodwin L.A."/>
            <person name="Grady D.L."/>
            <person name="Grigoriev I."/>
            <person name="Groza M."/>
            <person name="Hammon N."/>
            <person name="Hawkins T."/>
            <person name="Haydu L."/>
            <person name="Hildebrand C.E."/>
            <person name="Huang W."/>
            <person name="Israni S."/>
            <person name="Jett J."/>
            <person name="Jewett P.B."/>
            <person name="Kadner K."/>
            <person name="Kimball H."/>
            <person name="Kobayashi A."/>
            <person name="Krawczyk M.-C."/>
            <person name="Leyba T."/>
            <person name="Longmire J.L."/>
            <person name="Lopez F."/>
            <person name="Lou Y."/>
            <person name="Lowry S."/>
            <person name="Ludeman T."/>
            <person name="Manohar C.F."/>
            <person name="Mark G.A."/>
            <person name="McMurray K.L."/>
            <person name="Meincke L.J."/>
            <person name="Morgan J."/>
            <person name="Moyzis R.K."/>
            <person name="Mundt M.O."/>
            <person name="Munk A.C."/>
            <person name="Nandkeshwar R.D."/>
            <person name="Pitluck S."/>
            <person name="Pollard M."/>
            <person name="Predki P."/>
            <person name="Parson-Quintana B."/>
            <person name="Ramirez L."/>
            <person name="Rash S."/>
            <person name="Retterer J."/>
            <person name="Ricke D.O."/>
            <person name="Robinson D.L."/>
            <person name="Rodriguez A."/>
            <person name="Salamov A."/>
            <person name="Saunders E.H."/>
            <person name="Scott D."/>
            <person name="Shough T."/>
            <person name="Stallings R.L."/>
            <person name="Stalvey M."/>
            <person name="Sutherland R.D."/>
            <person name="Tapia R."/>
            <person name="Tesmer J.G."/>
            <person name="Thayer N."/>
            <person name="Thompson L.S."/>
            <person name="Tice H."/>
            <person name="Torney D.C."/>
            <person name="Tran-Gyamfi M."/>
            <person name="Tsai M."/>
            <person name="Ulanovsky L.E."/>
            <person name="Ustaszewska A."/>
            <person name="Vo N."/>
            <person name="White P.S."/>
            <person name="Williams A.L."/>
            <person name="Wills P.L."/>
            <person name="Wu J.-R."/>
            <person name="Wu K."/>
            <person name="Yang J."/>
            <person name="DeJong P."/>
            <person name="Bruce D."/>
            <person name="Doggett N.A."/>
            <person name="Deaven L."/>
            <person name="Schmutz J."/>
            <person name="Grimwood J."/>
            <person name="Richardson P."/>
            <person name="Rokhsar D.S."/>
            <person name="Eichler E.E."/>
            <person name="Gilna P."/>
            <person name="Lucas S.M."/>
            <person name="Myers R.M."/>
            <person name="Rubin E.M."/>
            <person name="Pennacchio L.A."/>
        </authorList>
    </citation>
    <scope>NUCLEOTIDE SEQUENCE [LARGE SCALE GENOMIC DNA]</scope>
</reference>
<reference key="3">
    <citation type="submission" date="2005-09" db="EMBL/GenBank/DDBJ databases">
        <authorList>
            <person name="Mural R.J."/>
            <person name="Istrail S."/>
            <person name="Sutton G.G."/>
            <person name="Florea L."/>
            <person name="Halpern A.L."/>
            <person name="Mobarry C.M."/>
            <person name="Lippert R."/>
            <person name="Walenz B."/>
            <person name="Shatkay H."/>
            <person name="Dew I."/>
            <person name="Miller J.R."/>
            <person name="Flanigan M.J."/>
            <person name="Edwards N.J."/>
            <person name="Bolanos R."/>
            <person name="Fasulo D."/>
            <person name="Halldorsson B.V."/>
            <person name="Hannenhalli S."/>
            <person name="Turner R."/>
            <person name="Yooseph S."/>
            <person name="Lu F."/>
            <person name="Nusskern D.R."/>
            <person name="Shue B.C."/>
            <person name="Zheng X.H."/>
            <person name="Zhong F."/>
            <person name="Delcher A.L."/>
            <person name="Huson D.H."/>
            <person name="Kravitz S.A."/>
            <person name="Mouchard L."/>
            <person name="Reinert K."/>
            <person name="Remington K.A."/>
            <person name="Clark A.G."/>
            <person name="Waterman M.S."/>
            <person name="Eichler E.E."/>
            <person name="Adams M.D."/>
            <person name="Hunkapiller M.W."/>
            <person name="Myers E.W."/>
            <person name="Venter J.C."/>
        </authorList>
    </citation>
    <scope>NUCLEOTIDE SEQUENCE [LARGE SCALE GENOMIC DNA]</scope>
</reference>
<reference key="4">
    <citation type="journal article" date="2004" name="Genome Res.">
        <title>The status, quality, and expansion of the NIH full-length cDNA project: the Mammalian Gene Collection (MGC).</title>
        <authorList>
            <consortium name="The MGC Project Team"/>
        </authorList>
    </citation>
    <scope>NUCLEOTIDE SEQUENCE [LARGE SCALE MRNA] (ISOFORM 1)</scope>
</reference>
<reference key="5">
    <citation type="journal article" date="2021" name="Proc. Natl. Acad. Sci. U.S.A.">
        <title>SPATA33 localizes calcineurin to the mitochondria and regulates sperm motility in mice.</title>
        <authorList>
            <person name="Miyata H."/>
            <person name="Oura S."/>
            <person name="Morohoshi A."/>
            <person name="Shimada K."/>
            <person name="Mashiko D."/>
            <person name="Oyama Y."/>
            <person name="Kaneda Y."/>
            <person name="Matsumura T."/>
            <person name="Abbasi F."/>
            <person name="Ikawa M."/>
        </authorList>
    </citation>
    <scope>INTERACTION WITH PPP3R1; PPP3R2; PPP3CA; PPP3CB AND PPP3CC</scope>
</reference>
<evidence type="ECO:0000250" key="1">
    <source>
        <dbReference type="UniProtKB" id="Q8C624"/>
    </source>
</evidence>
<evidence type="ECO:0000256" key="2">
    <source>
        <dbReference type="SAM" id="MobiDB-lite"/>
    </source>
</evidence>
<evidence type="ECO:0000269" key="3">
    <source>
    </source>
</evidence>
<evidence type="ECO:0000303" key="4">
    <source>
    </source>
</evidence>
<keyword id="KW-0025">Alternative splicing</keyword>
<keyword id="KW-0072">Autophagy</keyword>
<keyword id="KW-0963">Cytoplasm</keyword>
<keyword id="KW-0496">Mitochondrion</keyword>
<keyword id="KW-0539">Nucleus</keyword>
<keyword id="KW-0597">Phosphoprotein</keyword>
<keyword id="KW-1267">Proteomics identification</keyword>
<keyword id="KW-1185">Reference proteome</keyword>
<protein>
    <recommendedName>
        <fullName>Spermatogenesis-associated protein 33</fullName>
    </recommendedName>
</protein>
<comment type="function">
    <text evidence="1">Plays an important role in sperm motility and male fertility (By similarity). Required for sperm midpiece flexibility and for the localization of sperm calcineurin to the mitochondria (By similarity). Promotes mitophagy as well as acts as an autophagy mediator in male germline cells (By similarity). Links damaged mitochondria to autophagosomes via its binding to the outer mitochondrial membrane protein VDAC2, as well as to key autophagy machinery component ATG16L1 (By similarity).</text>
</comment>
<comment type="subunit">
    <text evidence="1 3">Interacts (via PQIIIT motif) with PPP3R1, PPP3R2, PPP3CA, PPP3CB and PPP3CC (PubMed:34446558). Interacts with VDAC2 (By similarity). Interacts with ATG16L1 (via WD repeats) (By similarity).</text>
</comment>
<comment type="interaction">
    <interactant intactId="EBI-17572815">
        <id>Q96N06</id>
    </interactant>
    <interactant intactId="EBI-2827192">
        <id>P48454</id>
        <label>PPP3CC</label>
    </interactant>
    <organismsDiffer>false</organismsDiffer>
    <experiments>4</experiments>
</comment>
<comment type="subcellular location">
    <subcellularLocation>
        <location evidence="1">Cytoplasm</location>
        <location evidence="1">Cytosol</location>
    </subcellularLocation>
    <subcellularLocation>
        <location evidence="1">Nucleus</location>
    </subcellularLocation>
    <subcellularLocation>
        <location evidence="1">Cytoplasm</location>
    </subcellularLocation>
    <subcellularLocation>
        <location evidence="1">Mitochondrion</location>
    </subcellularLocation>
</comment>
<comment type="alternative products">
    <event type="alternative splicing"/>
    <isoform>
        <id>Q96N06-1</id>
        <name>1</name>
        <sequence type="displayed"/>
    </isoform>
    <isoform>
        <id>Q96N06-2</id>
        <name>2</name>
        <sequence type="described" ref="VSP_053288"/>
    </isoform>
</comment>